<feature type="chain" id="PRO_1000053603" description="Protein GrpE">
    <location>
        <begin position="1"/>
        <end position="209"/>
    </location>
</feature>
<feature type="region of interest" description="Disordered" evidence="2">
    <location>
        <begin position="1"/>
        <end position="60"/>
    </location>
</feature>
<feature type="compositionally biased region" description="Basic and acidic residues" evidence="2">
    <location>
        <begin position="1"/>
        <end position="18"/>
    </location>
</feature>
<feature type="compositionally biased region" description="Polar residues" evidence="2">
    <location>
        <begin position="23"/>
        <end position="33"/>
    </location>
</feature>
<feature type="compositionally biased region" description="Basic and acidic residues" evidence="2">
    <location>
        <begin position="50"/>
        <end position="60"/>
    </location>
</feature>
<sequence length="209" mass="23598">MKIFNKDGNKNSKEDTKAGAENSEAQNSGSSAEEVNKARENPEEASASSEAEKSPEVKCQEEKQVLMEKYYRLAADFDNFKKRTARQMEENRKAVLEQVLLDFVEVTDNFDRALKSAKTAEDMSSIVSGIEQLSRQFFSILEKYGLEKIESEKASEFDPHRHEAVHHIETSEVPDNTIVDVYKTGYALNSKVIRPAMVSVARNPDEAEK</sequence>
<keyword id="KW-0143">Chaperone</keyword>
<keyword id="KW-0963">Cytoplasm</keyword>
<keyword id="KW-0346">Stress response</keyword>
<proteinExistence type="inferred from homology"/>
<comment type="function">
    <text evidence="1">Participates actively in the response to hyperosmotic and heat shock by preventing the aggregation of stress-denatured proteins, in association with DnaK and GrpE. It is the nucleotide exchange factor for DnaK and may function as a thermosensor. Unfolded proteins bind initially to DnaJ; upon interaction with the DnaJ-bound protein, DnaK hydrolyzes its bound ATP, resulting in the formation of a stable complex. GrpE releases ADP from DnaK; ATP binding to DnaK triggers the release of the substrate protein, thus completing the reaction cycle. Several rounds of ATP-dependent interactions between DnaJ, DnaK and GrpE are required for fully efficient folding.</text>
</comment>
<comment type="subunit">
    <text evidence="1">Homodimer.</text>
</comment>
<comment type="subcellular location">
    <subcellularLocation>
        <location evidence="1">Cytoplasm</location>
    </subcellularLocation>
</comment>
<comment type="similarity">
    <text evidence="1">Belongs to the GrpE family.</text>
</comment>
<gene>
    <name evidence="1" type="primary">grpE</name>
    <name type="ordered locus">Mbar_A3434</name>
</gene>
<reference key="1">
    <citation type="journal article" date="2006" name="J. Bacteriol.">
        <title>The Methanosarcina barkeri genome: comparative analysis with Methanosarcina acetivorans and Methanosarcina mazei reveals extensive rearrangement within methanosarcinal genomes.</title>
        <authorList>
            <person name="Maeder D.L."/>
            <person name="Anderson I."/>
            <person name="Brettin T.S."/>
            <person name="Bruce D.C."/>
            <person name="Gilna P."/>
            <person name="Han C.S."/>
            <person name="Lapidus A."/>
            <person name="Metcalf W.W."/>
            <person name="Saunders E."/>
            <person name="Tapia R."/>
            <person name="Sowers K.R."/>
        </authorList>
    </citation>
    <scope>NUCLEOTIDE SEQUENCE [LARGE SCALE GENOMIC DNA]</scope>
    <source>
        <strain>Fusaro / DSM 804</strain>
    </source>
</reference>
<dbReference type="EMBL" id="CP000099">
    <property type="protein sequence ID" value="AAZ72307.1"/>
    <property type="molecule type" value="Genomic_DNA"/>
</dbReference>
<dbReference type="SMR" id="Q465Y5"/>
<dbReference type="STRING" id="269797.Mbar_A3434"/>
<dbReference type="PaxDb" id="269797-Mbar_A3434"/>
<dbReference type="KEGG" id="mba:Mbar_A3434"/>
<dbReference type="eggNOG" id="arCOG04772">
    <property type="taxonomic scope" value="Archaea"/>
</dbReference>
<dbReference type="HOGENOM" id="CLU_057217_5_1_2"/>
<dbReference type="OrthoDB" id="372230at2157"/>
<dbReference type="GO" id="GO:0005737">
    <property type="term" value="C:cytoplasm"/>
    <property type="evidence" value="ECO:0007669"/>
    <property type="project" value="UniProtKB-SubCell"/>
</dbReference>
<dbReference type="GO" id="GO:0000774">
    <property type="term" value="F:adenyl-nucleotide exchange factor activity"/>
    <property type="evidence" value="ECO:0007669"/>
    <property type="project" value="InterPro"/>
</dbReference>
<dbReference type="GO" id="GO:0042803">
    <property type="term" value="F:protein homodimerization activity"/>
    <property type="evidence" value="ECO:0007669"/>
    <property type="project" value="InterPro"/>
</dbReference>
<dbReference type="GO" id="GO:0051087">
    <property type="term" value="F:protein-folding chaperone binding"/>
    <property type="evidence" value="ECO:0007669"/>
    <property type="project" value="InterPro"/>
</dbReference>
<dbReference type="GO" id="GO:0051082">
    <property type="term" value="F:unfolded protein binding"/>
    <property type="evidence" value="ECO:0007669"/>
    <property type="project" value="TreeGrafter"/>
</dbReference>
<dbReference type="GO" id="GO:0006457">
    <property type="term" value="P:protein folding"/>
    <property type="evidence" value="ECO:0007669"/>
    <property type="project" value="InterPro"/>
</dbReference>
<dbReference type="CDD" id="cd00446">
    <property type="entry name" value="GrpE"/>
    <property type="match status" value="1"/>
</dbReference>
<dbReference type="FunFam" id="2.30.22.10:FF:000001">
    <property type="entry name" value="Protein GrpE"/>
    <property type="match status" value="1"/>
</dbReference>
<dbReference type="Gene3D" id="3.90.20.20">
    <property type="match status" value="1"/>
</dbReference>
<dbReference type="Gene3D" id="2.30.22.10">
    <property type="entry name" value="Head domain of nucleotide exchange factor GrpE"/>
    <property type="match status" value="1"/>
</dbReference>
<dbReference type="HAMAP" id="MF_01151">
    <property type="entry name" value="GrpE"/>
    <property type="match status" value="1"/>
</dbReference>
<dbReference type="InterPro" id="IPR000740">
    <property type="entry name" value="GrpE"/>
</dbReference>
<dbReference type="InterPro" id="IPR013805">
    <property type="entry name" value="GrpE_coiled_coil"/>
</dbReference>
<dbReference type="InterPro" id="IPR009012">
    <property type="entry name" value="GrpE_head"/>
</dbReference>
<dbReference type="NCBIfam" id="NF010750">
    <property type="entry name" value="PRK14153.1"/>
    <property type="match status" value="1"/>
</dbReference>
<dbReference type="PANTHER" id="PTHR21237">
    <property type="entry name" value="GRPE PROTEIN"/>
    <property type="match status" value="1"/>
</dbReference>
<dbReference type="PANTHER" id="PTHR21237:SF23">
    <property type="entry name" value="GRPE PROTEIN HOMOLOG, MITOCHONDRIAL"/>
    <property type="match status" value="1"/>
</dbReference>
<dbReference type="Pfam" id="PF01025">
    <property type="entry name" value="GrpE"/>
    <property type="match status" value="1"/>
</dbReference>
<dbReference type="PRINTS" id="PR00773">
    <property type="entry name" value="GRPEPROTEIN"/>
</dbReference>
<dbReference type="SUPFAM" id="SSF58014">
    <property type="entry name" value="Coiled-coil domain of nucleotide exchange factor GrpE"/>
    <property type="match status" value="1"/>
</dbReference>
<dbReference type="SUPFAM" id="SSF51064">
    <property type="entry name" value="Head domain of nucleotide exchange factor GrpE"/>
    <property type="match status" value="1"/>
</dbReference>
<dbReference type="PROSITE" id="PS01071">
    <property type="entry name" value="GRPE"/>
    <property type="match status" value="1"/>
</dbReference>
<name>GRPE_METBF</name>
<accession>Q465Y5</accession>
<evidence type="ECO:0000255" key="1">
    <source>
        <dbReference type="HAMAP-Rule" id="MF_01151"/>
    </source>
</evidence>
<evidence type="ECO:0000256" key="2">
    <source>
        <dbReference type="SAM" id="MobiDB-lite"/>
    </source>
</evidence>
<protein>
    <recommendedName>
        <fullName evidence="1">Protein GrpE</fullName>
    </recommendedName>
    <alternativeName>
        <fullName evidence="1">HSP-70 cofactor</fullName>
    </alternativeName>
</protein>
<organism>
    <name type="scientific">Methanosarcina barkeri (strain Fusaro / DSM 804)</name>
    <dbReference type="NCBI Taxonomy" id="269797"/>
    <lineage>
        <taxon>Archaea</taxon>
        <taxon>Methanobacteriati</taxon>
        <taxon>Methanobacteriota</taxon>
        <taxon>Stenosarchaea group</taxon>
        <taxon>Methanomicrobia</taxon>
        <taxon>Methanosarcinales</taxon>
        <taxon>Methanosarcinaceae</taxon>
        <taxon>Methanosarcina</taxon>
    </lineage>
</organism>